<feature type="chain" id="PRO_1000054070" description="Cyclic pyranopterin monophosphate synthase">
    <location>
        <begin position="1"/>
        <end position="168"/>
    </location>
</feature>
<feature type="active site" evidence="1">
    <location>
        <position position="130"/>
    </location>
</feature>
<feature type="binding site" evidence="1">
    <location>
        <begin position="75"/>
        <end position="77"/>
    </location>
    <ligand>
        <name>substrate</name>
    </ligand>
</feature>
<feature type="binding site" evidence="1">
    <location>
        <begin position="115"/>
        <end position="116"/>
    </location>
    <ligand>
        <name>substrate</name>
    </ligand>
</feature>
<sequence>MNEFTHFNEQGRAKMVDISEKEASVRTAAAVSSVSMNREVHEKIKNREIGKGDVLAVAQVAGIMAAKQTSAIIPMCHPIALKGVDIAFCWEKKEQKSILHIQSNVKTKGSTGVEMEALTSASVCALTVYDMCKAADKGMVIGPTFLLEKTGGKNGDYKREKADVDMED</sequence>
<evidence type="ECO:0000255" key="1">
    <source>
        <dbReference type="HAMAP-Rule" id="MF_01224"/>
    </source>
</evidence>
<gene>
    <name evidence="1" type="primary">moaC</name>
    <name type="ordered locus">BLi00617</name>
    <name type="ordered locus">BL00846</name>
</gene>
<organism>
    <name type="scientific">Bacillus licheniformis (strain ATCC 14580 / DSM 13 / JCM 2505 / CCUG 7422 / NBRC 12200 / NCIMB 9375 / NCTC 10341 / NRRL NRS-1264 / Gibson 46)</name>
    <dbReference type="NCBI Taxonomy" id="279010"/>
    <lineage>
        <taxon>Bacteria</taxon>
        <taxon>Bacillati</taxon>
        <taxon>Bacillota</taxon>
        <taxon>Bacilli</taxon>
        <taxon>Bacillales</taxon>
        <taxon>Bacillaceae</taxon>
        <taxon>Bacillus</taxon>
    </lineage>
</organism>
<accession>Q65N05</accession>
<accession>Q62YF2</accession>
<name>MOAC_BACLD</name>
<comment type="function">
    <text evidence="1">Catalyzes the conversion of (8S)-3',8-cyclo-7,8-dihydroguanosine 5'-triphosphate to cyclic pyranopterin monophosphate (cPMP).</text>
</comment>
<comment type="catalytic activity">
    <reaction evidence="1">
        <text>(8S)-3',8-cyclo-7,8-dihydroguanosine 5'-triphosphate = cyclic pyranopterin phosphate + diphosphate</text>
        <dbReference type="Rhea" id="RHEA:49580"/>
        <dbReference type="ChEBI" id="CHEBI:33019"/>
        <dbReference type="ChEBI" id="CHEBI:59648"/>
        <dbReference type="ChEBI" id="CHEBI:131766"/>
        <dbReference type="EC" id="4.6.1.17"/>
    </reaction>
</comment>
<comment type="pathway">
    <text evidence="1">Cofactor biosynthesis; molybdopterin biosynthesis.</text>
</comment>
<comment type="subunit">
    <text evidence="1">Homohexamer; trimer of dimers.</text>
</comment>
<comment type="similarity">
    <text evidence="1">Belongs to the MoaC family.</text>
</comment>
<keyword id="KW-0456">Lyase</keyword>
<keyword id="KW-0501">Molybdenum cofactor biosynthesis</keyword>
<keyword id="KW-1185">Reference proteome</keyword>
<dbReference type="EC" id="4.6.1.17" evidence="1"/>
<dbReference type="EMBL" id="CP000002">
    <property type="protein sequence ID" value="AAU22206.1"/>
    <property type="molecule type" value="Genomic_DNA"/>
</dbReference>
<dbReference type="EMBL" id="AE017333">
    <property type="protein sequence ID" value="AAU39559.1"/>
    <property type="molecule type" value="Genomic_DNA"/>
</dbReference>
<dbReference type="RefSeq" id="WP_003179234.1">
    <property type="nucleotide sequence ID" value="NC_006322.1"/>
</dbReference>
<dbReference type="SMR" id="Q65N05"/>
<dbReference type="STRING" id="279010.BL00846"/>
<dbReference type="GeneID" id="92862798"/>
<dbReference type="KEGG" id="bld:BLi00617"/>
<dbReference type="KEGG" id="bli:BL00846"/>
<dbReference type="eggNOG" id="COG0315">
    <property type="taxonomic scope" value="Bacteria"/>
</dbReference>
<dbReference type="HOGENOM" id="CLU_074693_1_1_9"/>
<dbReference type="UniPathway" id="UPA00344"/>
<dbReference type="Proteomes" id="UP000000606">
    <property type="component" value="Chromosome"/>
</dbReference>
<dbReference type="GO" id="GO:0061799">
    <property type="term" value="F:cyclic pyranopterin monophosphate synthase activity"/>
    <property type="evidence" value="ECO:0007669"/>
    <property type="project" value="UniProtKB-UniRule"/>
</dbReference>
<dbReference type="GO" id="GO:0006777">
    <property type="term" value="P:Mo-molybdopterin cofactor biosynthetic process"/>
    <property type="evidence" value="ECO:0007669"/>
    <property type="project" value="UniProtKB-UniRule"/>
</dbReference>
<dbReference type="CDD" id="cd01420">
    <property type="entry name" value="MoaC_PE"/>
    <property type="match status" value="1"/>
</dbReference>
<dbReference type="Gene3D" id="3.30.70.640">
    <property type="entry name" value="Molybdopterin cofactor biosynthesis C (MoaC) domain"/>
    <property type="match status" value="1"/>
</dbReference>
<dbReference type="HAMAP" id="MF_01224_B">
    <property type="entry name" value="MoaC_B"/>
    <property type="match status" value="1"/>
</dbReference>
<dbReference type="InterPro" id="IPR023045">
    <property type="entry name" value="MoaC"/>
</dbReference>
<dbReference type="InterPro" id="IPR047594">
    <property type="entry name" value="MoaC_bact/euk"/>
</dbReference>
<dbReference type="InterPro" id="IPR036522">
    <property type="entry name" value="MoaC_sf"/>
</dbReference>
<dbReference type="InterPro" id="IPR050105">
    <property type="entry name" value="MoCo_biosynth_MoaA/MoaC"/>
</dbReference>
<dbReference type="InterPro" id="IPR002820">
    <property type="entry name" value="Mopterin_CF_biosynth-C_dom"/>
</dbReference>
<dbReference type="NCBIfam" id="TIGR00581">
    <property type="entry name" value="moaC"/>
    <property type="match status" value="1"/>
</dbReference>
<dbReference type="NCBIfam" id="NF006870">
    <property type="entry name" value="PRK09364.1"/>
    <property type="match status" value="1"/>
</dbReference>
<dbReference type="PANTHER" id="PTHR22960:SF29">
    <property type="entry name" value="CYCLIC PYRANOPTERIN MONOPHOSPHATE SYNTHASE"/>
    <property type="match status" value="1"/>
</dbReference>
<dbReference type="PANTHER" id="PTHR22960">
    <property type="entry name" value="MOLYBDOPTERIN COFACTOR SYNTHESIS PROTEIN A"/>
    <property type="match status" value="1"/>
</dbReference>
<dbReference type="Pfam" id="PF01967">
    <property type="entry name" value="MoaC"/>
    <property type="match status" value="1"/>
</dbReference>
<dbReference type="SUPFAM" id="SSF55040">
    <property type="entry name" value="Molybdenum cofactor biosynthesis protein C, MoaC"/>
    <property type="match status" value="1"/>
</dbReference>
<protein>
    <recommendedName>
        <fullName evidence="1">Cyclic pyranopterin monophosphate synthase</fullName>
        <ecNumber evidence="1">4.6.1.17</ecNumber>
    </recommendedName>
    <alternativeName>
        <fullName evidence="1">Molybdenum cofactor biosynthesis protein C</fullName>
    </alternativeName>
</protein>
<proteinExistence type="inferred from homology"/>
<reference key="1">
    <citation type="journal article" date="2004" name="J. Mol. Microbiol. Biotechnol.">
        <title>The complete genome sequence of Bacillus licheniformis DSM13, an organism with great industrial potential.</title>
        <authorList>
            <person name="Veith B."/>
            <person name="Herzberg C."/>
            <person name="Steckel S."/>
            <person name="Feesche J."/>
            <person name="Maurer K.H."/>
            <person name="Ehrenreich P."/>
            <person name="Baeumer S."/>
            <person name="Henne A."/>
            <person name="Liesegang H."/>
            <person name="Merkl R."/>
            <person name="Ehrenreich A."/>
            <person name="Gottschalk G."/>
        </authorList>
    </citation>
    <scope>NUCLEOTIDE SEQUENCE [LARGE SCALE GENOMIC DNA]</scope>
    <source>
        <strain>ATCC 14580 / DSM 13 / JCM 2505 / CCUG 7422 / NBRC 12200 / NCIMB 9375 / NCTC 10341 / NRRL NRS-1264 / Gibson 46</strain>
    </source>
</reference>
<reference key="2">
    <citation type="journal article" date="2004" name="Genome Biol.">
        <title>Complete genome sequence of the industrial bacterium Bacillus licheniformis and comparisons with closely related Bacillus species.</title>
        <authorList>
            <person name="Rey M.W."/>
            <person name="Ramaiya P."/>
            <person name="Nelson B.A."/>
            <person name="Brody-Karpin S.D."/>
            <person name="Zaretsky E.J."/>
            <person name="Tang M."/>
            <person name="Lopez de Leon A."/>
            <person name="Xiang H."/>
            <person name="Gusti V."/>
            <person name="Clausen I.G."/>
            <person name="Olsen P.B."/>
            <person name="Rasmussen M.D."/>
            <person name="Andersen J.T."/>
            <person name="Joergensen P.L."/>
            <person name="Larsen T.S."/>
            <person name="Sorokin A."/>
            <person name="Bolotin A."/>
            <person name="Lapidus A."/>
            <person name="Galleron N."/>
            <person name="Ehrlich S.D."/>
            <person name="Berka R.M."/>
        </authorList>
    </citation>
    <scope>NUCLEOTIDE SEQUENCE [LARGE SCALE GENOMIC DNA]</scope>
    <source>
        <strain>ATCC 14580 / DSM 13 / JCM 2505 / CCUG 7422 / NBRC 12200 / NCIMB 9375 / NCTC 10341 / NRRL NRS-1264 / Gibson 46</strain>
    </source>
</reference>